<sequence length="77" mass="8540">MAATDFVQEMRAVGERLLLKLQRLPQAEPVEIVAFSVIILFTATVLLLLLIACSCCCTHCCCPERRGRKVQVQPTPP</sequence>
<name>SMIM5_HUMAN</name>
<proteinExistence type="evidence at protein level"/>
<comment type="interaction">
    <interactant intactId="EBI-12334905">
        <id>Q71RC9</id>
    </interactant>
    <interactant intactId="EBI-2808808">
        <id>P53367</id>
        <label>ARFIP1</label>
    </interactant>
    <organismsDiffer>false</organismsDiffer>
    <experiments>3</experiments>
</comment>
<comment type="interaction">
    <interactant intactId="EBI-12334905">
        <id>Q71RC9</id>
    </interactant>
    <interactant intactId="EBI-2339219">
        <id>Q08426</id>
        <label>EHHADH</label>
    </interactant>
    <organismsDiffer>false</organismsDiffer>
    <experiments>3</experiments>
</comment>
<comment type="interaction">
    <interactant intactId="EBI-12334905">
        <id>Q71RC9</id>
    </interactant>
    <interactant intactId="EBI-722696">
        <id>Q7Z6L0</id>
        <label>PRRT2</label>
    </interactant>
    <organismsDiffer>false</organismsDiffer>
    <experiments>3</experiments>
</comment>
<comment type="interaction">
    <interactant intactId="EBI-12334905">
        <id>Q71RC9</id>
    </interactant>
    <interactant intactId="EBI-3232108">
        <id>Q8N0V3</id>
        <label>RBFA</label>
    </interactant>
    <organismsDiffer>false</organismsDiffer>
    <experiments>3</experiments>
</comment>
<comment type="interaction">
    <interactant intactId="EBI-12334905">
        <id>Q71RC9</id>
    </interactant>
    <interactant intactId="EBI-347996">
        <id>O43765</id>
        <label>SGTA</label>
    </interactant>
    <organismsDiffer>false</organismsDiffer>
    <experiments>9</experiments>
</comment>
<comment type="interaction">
    <interactant intactId="EBI-12334905">
        <id>Q71RC9</id>
    </interactant>
    <interactant intactId="EBI-2623095">
        <id>Q9Y371</id>
        <label>SH3GLB1</label>
    </interactant>
    <organismsDiffer>false</organismsDiffer>
    <experiments>3</experiments>
</comment>
<comment type="interaction">
    <interactant intactId="EBI-12334905">
        <id>Q71RC9</id>
    </interactant>
    <interactant intactId="EBI-2849569">
        <id>Q9BQ24</id>
        <label>ZFYVE21</label>
    </interactant>
    <organismsDiffer>false</organismsDiffer>
    <experiments>3</experiments>
</comment>
<comment type="subcellular location">
    <subcellularLocation>
        <location evidence="2">Membrane</location>
        <topology evidence="2">Single-pass membrane protein</topology>
    </subcellularLocation>
</comment>
<comment type="sequence caution" evidence="2">
    <conflict type="erroneous translation">
        <sequence resource="EMBL-CDS" id="AAQ15244"/>
    </conflict>
    <text>Wrong choice of CDS.</text>
</comment>
<comment type="sequence caution" evidence="2">
    <conflict type="erroneous gene model prediction">
        <sequence resource="EMBL-CDS" id="EAW89296"/>
    </conflict>
</comment>
<dbReference type="EMBL" id="AF370408">
    <property type="protein sequence ID" value="AAQ15244.1"/>
    <property type="status" value="ALT_SEQ"/>
    <property type="molecule type" value="mRNA"/>
</dbReference>
<dbReference type="EMBL" id="AC087749">
    <property type="status" value="NOT_ANNOTATED_CDS"/>
    <property type="molecule type" value="Genomic_DNA"/>
</dbReference>
<dbReference type="EMBL" id="CH471099">
    <property type="protein sequence ID" value="EAW89296.1"/>
    <property type="status" value="ALT_SEQ"/>
    <property type="molecule type" value="Genomic_DNA"/>
</dbReference>
<dbReference type="CCDS" id="CCDS54165.1"/>
<dbReference type="RefSeq" id="NP_001156467.1">
    <property type="nucleotide sequence ID" value="NM_001162995.3"/>
</dbReference>
<dbReference type="RefSeq" id="XP_011523420.1">
    <property type="nucleotide sequence ID" value="XM_011525118.2"/>
</dbReference>
<dbReference type="RefSeq" id="XP_011523421.1">
    <property type="nucleotide sequence ID" value="XM_011525119.3"/>
</dbReference>
<dbReference type="RefSeq" id="XP_016880435.1">
    <property type="nucleotide sequence ID" value="XM_017024946.1"/>
</dbReference>
<dbReference type="RefSeq" id="XP_016880436.1">
    <property type="nucleotide sequence ID" value="XM_017024947.3"/>
</dbReference>
<dbReference type="RefSeq" id="XP_016880437.1">
    <property type="nucleotide sequence ID" value="XM_017024948.1"/>
</dbReference>
<dbReference type="RefSeq" id="XP_047292486.1">
    <property type="nucleotide sequence ID" value="XM_047436530.1"/>
</dbReference>
<dbReference type="RefSeq" id="XP_047292487.1">
    <property type="nucleotide sequence ID" value="XM_047436531.1"/>
</dbReference>
<dbReference type="RefSeq" id="XP_054172882.1">
    <property type="nucleotide sequence ID" value="XM_054316907.1"/>
</dbReference>
<dbReference type="RefSeq" id="XP_054172884.1">
    <property type="nucleotide sequence ID" value="XM_054316909.1"/>
</dbReference>
<dbReference type="SMR" id="Q71RC9"/>
<dbReference type="BioGRID" id="568424">
    <property type="interactions" value="69"/>
</dbReference>
<dbReference type="FunCoup" id="Q71RC9">
    <property type="interactions" value="14"/>
</dbReference>
<dbReference type="IntAct" id="Q71RC9">
    <property type="interactions" value="40"/>
</dbReference>
<dbReference type="STRING" id="9606.ENSP00000477017"/>
<dbReference type="GlyGen" id="Q71RC9">
    <property type="glycosylation" value="1 site"/>
</dbReference>
<dbReference type="BioMuta" id="SMIM5"/>
<dbReference type="DMDM" id="338817840"/>
<dbReference type="MassIVE" id="Q71RC9"/>
<dbReference type="PaxDb" id="9606-ENSP00000477017"/>
<dbReference type="PeptideAtlas" id="Q71RC9"/>
<dbReference type="ProteomicsDB" id="68614"/>
<dbReference type="Antibodypedia" id="76985">
    <property type="antibodies" value="30 antibodies from 6 providers"/>
</dbReference>
<dbReference type="DNASU" id="643008"/>
<dbReference type="Ensembl" id="ENST00000375215.3">
    <property type="protein sequence ID" value="ENSP00000364363.3"/>
    <property type="gene ID" value="ENSG00000204323.5"/>
</dbReference>
<dbReference type="Ensembl" id="ENST00000537494.1">
    <property type="protein sequence ID" value="ENSP00000477017.1"/>
    <property type="gene ID" value="ENSG00000204323.5"/>
</dbReference>
<dbReference type="GeneID" id="643008"/>
<dbReference type="KEGG" id="hsa:643008"/>
<dbReference type="MANE-Select" id="ENST00000375215.3">
    <property type="protein sequence ID" value="ENSP00000364363.3"/>
    <property type="RefSeq nucleotide sequence ID" value="NM_001162995.3"/>
    <property type="RefSeq protein sequence ID" value="NP_001156467.1"/>
</dbReference>
<dbReference type="UCSC" id="uc002jow.3">
    <property type="organism name" value="human"/>
</dbReference>
<dbReference type="AGR" id="HGNC:40030"/>
<dbReference type="CTD" id="643008"/>
<dbReference type="GeneCards" id="SMIM5"/>
<dbReference type="HGNC" id="HGNC:40030">
    <property type="gene designation" value="SMIM5"/>
</dbReference>
<dbReference type="HPA" id="ENSG00000204323">
    <property type="expression patterns" value="Low tissue specificity"/>
</dbReference>
<dbReference type="neXtProt" id="NX_Q71RC9"/>
<dbReference type="OpenTargets" id="ENSG00000204323"/>
<dbReference type="VEuPathDB" id="HostDB:ENSG00000204323"/>
<dbReference type="eggNOG" id="ENOG502S8TU">
    <property type="taxonomic scope" value="Eukaryota"/>
</dbReference>
<dbReference type="GeneTree" id="ENSGT00520000062027"/>
<dbReference type="HOGENOM" id="CLU_2644314_0_0_1"/>
<dbReference type="InParanoid" id="Q71RC9"/>
<dbReference type="OMA" id="HCCCCGK"/>
<dbReference type="OrthoDB" id="8789646at2759"/>
<dbReference type="PAN-GO" id="Q71RC9">
    <property type="GO annotations" value="0 GO annotations based on evolutionary models"/>
</dbReference>
<dbReference type="TreeFam" id="TF330807"/>
<dbReference type="PathwayCommons" id="Q71RC9"/>
<dbReference type="SignaLink" id="Q71RC9"/>
<dbReference type="BioGRID-ORCS" id="643008">
    <property type="hits" value="27 hits in 1109 CRISPR screens"/>
</dbReference>
<dbReference type="ChiTaRS" id="SMIM5">
    <property type="organism name" value="human"/>
</dbReference>
<dbReference type="GenomeRNAi" id="643008"/>
<dbReference type="Pharos" id="Q71RC9">
    <property type="development level" value="Tdark"/>
</dbReference>
<dbReference type="PRO" id="PR:Q71RC9"/>
<dbReference type="Proteomes" id="UP000005640">
    <property type="component" value="Chromosome 17"/>
</dbReference>
<dbReference type="RNAct" id="Q71RC9">
    <property type="molecule type" value="protein"/>
</dbReference>
<dbReference type="Bgee" id="ENSG00000204323">
    <property type="expression patterns" value="Expressed in pancreatic ductal cell and 139 other cell types or tissues"/>
</dbReference>
<dbReference type="GO" id="GO:0016020">
    <property type="term" value="C:membrane"/>
    <property type="evidence" value="ECO:0007669"/>
    <property type="project" value="UniProtKB-SubCell"/>
</dbReference>
<dbReference type="CDD" id="cd20254">
    <property type="entry name" value="CASIMO1_SMIM5"/>
    <property type="match status" value="1"/>
</dbReference>
<dbReference type="InterPro" id="IPR047133">
    <property type="entry name" value="SMIM5"/>
</dbReference>
<dbReference type="InterPro" id="IPR031671">
    <property type="entry name" value="SMIM5/18/22"/>
</dbReference>
<dbReference type="PANTHER" id="PTHR37344">
    <property type="entry name" value="SMALL INTEGRAL MEMBRANE PROTEIN 5"/>
    <property type="match status" value="1"/>
</dbReference>
<dbReference type="PANTHER" id="PTHR37344:SF1">
    <property type="entry name" value="SMALL INTEGRAL MEMBRANE PROTEIN 5"/>
    <property type="match status" value="1"/>
</dbReference>
<dbReference type="Pfam" id="PF15831">
    <property type="entry name" value="SMIM5_18_22"/>
    <property type="match status" value="1"/>
</dbReference>
<evidence type="ECO:0000255" key="1"/>
<evidence type="ECO:0000305" key="2"/>
<organism>
    <name type="scientific">Homo sapiens</name>
    <name type="common">Human</name>
    <dbReference type="NCBI Taxonomy" id="9606"/>
    <lineage>
        <taxon>Eukaryota</taxon>
        <taxon>Metazoa</taxon>
        <taxon>Chordata</taxon>
        <taxon>Craniata</taxon>
        <taxon>Vertebrata</taxon>
        <taxon>Euteleostomi</taxon>
        <taxon>Mammalia</taxon>
        <taxon>Eutheria</taxon>
        <taxon>Euarchontoglires</taxon>
        <taxon>Primates</taxon>
        <taxon>Haplorrhini</taxon>
        <taxon>Catarrhini</taxon>
        <taxon>Hominidae</taxon>
        <taxon>Homo</taxon>
    </lineage>
</organism>
<gene>
    <name type="primary">SMIM5</name>
    <name type="synonym">C17orf109</name>
</gene>
<protein>
    <recommendedName>
        <fullName>Small integral membrane protein 5</fullName>
    </recommendedName>
</protein>
<keyword id="KW-0472">Membrane</keyword>
<keyword id="KW-1267">Proteomics identification</keyword>
<keyword id="KW-1185">Reference proteome</keyword>
<keyword id="KW-0812">Transmembrane</keyword>
<keyword id="KW-1133">Transmembrane helix</keyword>
<accession>Q71RC9</accession>
<feature type="chain" id="PRO_0000410867" description="Small integral membrane protein 5">
    <location>
        <begin position="1"/>
        <end position="77"/>
    </location>
</feature>
<feature type="transmembrane region" description="Helical" evidence="1">
    <location>
        <begin position="32"/>
        <end position="52"/>
    </location>
</feature>
<reference key="1">
    <citation type="submission" date="2001-04" db="EMBL/GenBank/DDBJ databases">
        <title>Novel human cDNA clones with function of inhibiting cancer cell growth.</title>
        <authorList>
            <person name="Huang Y."/>
            <person name="Zhou X.M."/>
            <person name="Zhang P.P."/>
            <person name="Jiang H.Q."/>
            <person name="Qin W.X."/>
            <person name="Zhao X.T."/>
            <person name="Wan D.F."/>
            <person name="Gu J.R."/>
        </authorList>
    </citation>
    <scope>NUCLEOTIDE SEQUENCE [MRNA]</scope>
</reference>
<reference key="2">
    <citation type="journal article" date="2006" name="Nature">
        <title>DNA sequence of human chromosome 17 and analysis of rearrangement in the human lineage.</title>
        <authorList>
            <person name="Zody M.C."/>
            <person name="Garber M."/>
            <person name="Adams D.J."/>
            <person name="Sharpe T."/>
            <person name="Harrow J."/>
            <person name="Lupski J.R."/>
            <person name="Nicholson C."/>
            <person name="Searle S.M."/>
            <person name="Wilming L."/>
            <person name="Young S.K."/>
            <person name="Abouelleil A."/>
            <person name="Allen N.R."/>
            <person name="Bi W."/>
            <person name="Bloom T."/>
            <person name="Borowsky M.L."/>
            <person name="Bugalter B.E."/>
            <person name="Butler J."/>
            <person name="Chang J.L."/>
            <person name="Chen C.-K."/>
            <person name="Cook A."/>
            <person name="Corum B."/>
            <person name="Cuomo C.A."/>
            <person name="de Jong P.J."/>
            <person name="DeCaprio D."/>
            <person name="Dewar K."/>
            <person name="FitzGerald M."/>
            <person name="Gilbert J."/>
            <person name="Gibson R."/>
            <person name="Gnerre S."/>
            <person name="Goldstein S."/>
            <person name="Grafham D.V."/>
            <person name="Grocock R."/>
            <person name="Hafez N."/>
            <person name="Hagopian D.S."/>
            <person name="Hart E."/>
            <person name="Norman C.H."/>
            <person name="Humphray S."/>
            <person name="Jaffe D.B."/>
            <person name="Jones M."/>
            <person name="Kamal M."/>
            <person name="Khodiyar V.K."/>
            <person name="LaButti K."/>
            <person name="Laird G."/>
            <person name="Lehoczky J."/>
            <person name="Liu X."/>
            <person name="Lokyitsang T."/>
            <person name="Loveland J."/>
            <person name="Lui A."/>
            <person name="Macdonald P."/>
            <person name="Major J.E."/>
            <person name="Matthews L."/>
            <person name="Mauceli E."/>
            <person name="McCarroll S.A."/>
            <person name="Mihalev A.H."/>
            <person name="Mudge J."/>
            <person name="Nguyen C."/>
            <person name="Nicol R."/>
            <person name="O'Leary S.B."/>
            <person name="Osoegawa K."/>
            <person name="Schwartz D.C."/>
            <person name="Shaw-Smith C."/>
            <person name="Stankiewicz P."/>
            <person name="Steward C."/>
            <person name="Swarbreck D."/>
            <person name="Venkataraman V."/>
            <person name="Whittaker C.A."/>
            <person name="Yang X."/>
            <person name="Zimmer A.R."/>
            <person name="Bradley A."/>
            <person name="Hubbard T."/>
            <person name="Birren B.W."/>
            <person name="Rogers J."/>
            <person name="Lander E.S."/>
            <person name="Nusbaum C."/>
        </authorList>
    </citation>
    <scope>NUCLEOTIDE SEQUENCE [LARGE SCALE GENOMIC DNA]</scope>
</reference>
<reference key="3">
    <citation type="submission" date="2005-07" db="EMBL/GenBank/DDBJ databases">
        <authorList>
            <person name="Mural R.J."/>
            <person name="Istrail S."/>
            <person name="Sutton G.G."/>
            <person name="Florea L."/>
            <person name="Halpern A.L."/>
            <person name="Mobarry C.M."/>
            <person name="Lippert R."/>
            <person name="Walenz B."/>
            <person name="Shatkay H."/>
            <person name="Dew I."/>
            <person name="Miller J.R."/>
            <person name="Flanigan M.J."/>
            <person name="Edwards N.J."/>
            <person name="Bolanos R."/>
            <person name="Fasulo D."/>
            <person name="Halldorsson B.V."/>
            <person name="Hannenhalli S."/>
            <person name="Turner R."/>
            <person name="Yooseph S."/>
            <person name="Lu F."/>
            <person name="Nusskern D.R."/>
            <person name="Shue B.C."/>
            <person name="Zheng X.H."/>
            <person name="Zhong F."/>
            <person name="Delcher A.L."/>
            <person name="Huson D.H."/>
            <person name="Kravitz S.A."/>
            <person name="Mouchard L."/>
            <person name="Reinert K."/>
            <person name="Remington K.A."/>
            <person name="Clark A.G."/>
            <person name="Waterman M.S."/>
            <person name="Eichler E.E."/>
            <person name="Adams M.D."/>
            <person name="Hunkapiller M.W."/>
            <person name="Myers E.W."/>
            <person name="Venter J.C."/>
        </authorList>
    </citation>
    <scope>NUCLEOTIDE SEQUENCE [LARGE SCALE GENOMIC DNA]</scope>
</reference>